<gene>
    <name type="primary">fixC</name>
</gene>
<sequence>GSEIKEYAAHLIPEGGFKAIPQLFGNGWVVVGDAAQLNNAVHREGSNLAMTSGLMAGEAIFQIKSRGGLMTKRNLSLYKGMLGKSFVMKDLMKHKDLPSLLHTDSHNFFMTYPTLISQAAQNFVRVDGAPKINTEKATAASFINARSRWGLISDAVRSAVSWR</sequence>
<comment type="function">
    <text>Could be required for the formation of a functional nitrogenase Fe protein. Probably accepts electrons from FixA/FixB and reduces a quinone.</text>
</comment>
<comment type="cofactor">
    <cofactor evidence="1">
        <name>FAD</name>
        <dbReference type="ChEBI" id="CHEBI:57692"/>
    </cofactor>
</comment>
<comment type="similarity">
    <text evidence="1">Belongs to the ETF-QO/FixC family.</text>
</comment>
<dbReference type="EMBL" id="X05049">
    <property type="protein sequence ID" value="CAA28721.1"/>
    <property type="molecule type" value="Genomic_DNA"/>
</dbReference>
<dbReference type="PIR" id="A25878">
    <property type="entry name" value="A25878"/>
</dbReference>
<dbReference type="SMR" id="P09821"/>
<dbReference type="GO" id="GO:0016491">
    <property type="term" value="F:oxidoreductase activity"/>
    <property type="evidence" value="ECO:0007669"/>
    <property type="project" value="UniProtKB-KW"/>
</dbReference>
<dbReference type="GO" id="GO:0009399">
    <property type="term" value="P:nitrogen fixation"/>
    <property type="evidence" value="ECO:0007669"/>
    <property type="project" value="UniProtKB-KW"/>
</dbReference>
<dbReference type="Gene3D" id="3.50.50.60">
    <property type="entry name" value="FAD/NAD(P)-binding domain"/>
    <property type="match status" value="1"/>
</dbReference>
<dbReference type="InterPro" id="IPR036188">
    <property type="entry name" value="FAD/NAD-bd_sf"/>
</dbReference>
<dbReference type="InterPro" id="IPR039651">
    <property type="entry name" value="FixC-like"/>
</dbReference>
<dbReference type="PANTHER" id="PTHR43624">
    <property type="entry name" value="ELECTRON TRANSFER FLAVOPROTEIN-QUINONE OXIDOREDUCTASE YDIS-RELATED"/>
    <property type="match status" value="1"/>
</dbReference>
<dbReference type="PANTHER" id="PTHR43624:SF2">
    <property type="entry name" value="ELECTRON TRANSFER FLAVOPROTEIN-QUINONE OXIDOREDUCTASE YDIS-RELATED"/>
    <property type="match status" value="1"/>
</dbReference>
<dbReference type="SUPFAM" id="SSF51905">
    <property type="entry name" value="FAD/NAD(P)-binding domain"/>
    <property type="match status" value="1"/>
</dbReference>
<accession>P09821</accession>
<geneLocation type="plasmid">
    <name>sym pRL6JI</name>
</geneLocation>
<evidence type="ECO:0000305" key="1"/>
<feature type="chain" id="PRO_0000200687" description="Protein FixC">
    <location>
        <begin position="1" status="less than"/>
        <end position="163"/>
    </location>
</feature>
<feature type="non-terminal residue">
    <location>
        <position position="1"/>
    </location>
</feature>
<protein>
    <recommendedName>
        <fullName>Protein FixC</fullName>
    </recommendedName>
</protein>
<proteinExistence type="inferred from homology"/>
<reference key="1">
    <citation type="journal article" date="1987" name="Nucleic Acids Res.">
        <title>Organization and partial sequence of a DNA region of the Rhizobium leguminosarum symbiotic plasmid pRL6JI containing the genes fixABC, nifA, nifB and a novel open reading frame.</title>
        <authorList>
            <person name="Groenger P."/>
            <person name="Manian S.S."/>
            <person name="Reilaender H."/>
            <person name="O'Connell M."/>
            <person name="Priefer U.B."/>
            <person name="Puehler A."/>
        </authorList>
    </citation>
    <scope>NUCLEOTIDE SEQUENCE [GENOMIC DNA]</scope>
</reference>
<keyword id="KW-0274">FAD</keyword>
<keyword id="KW-0285">Flavoprotein</keyword>
<keyword id="KW-0535">Nitrogen fixation</keyword>
<keyword id="KW-0560">Oxidoreductase</keyword>
<keyword id="KW-0614">Plasmid</keyword>
<name>FIXC_RHILE</name>
<organism>
    <name type="scientific">Rhizobium leguminosarum</name>
    <dbReference type="NCBI Taxonomy" id="384"/>
    <lineage>
        <taxon>Bacteria</taxon>
        <taxon>Pseudomonadati</taxon>
        <taxon>Pseudomonadota</taxon>
        <taxon>Alphaproteobacteria</taxon>
        <taxon>Hyphomicrobiales</taxon>
        <taxon>Rhizobiaceae</taxon>
        <taxon>Rhizobium/Agrobacterium group</taxon>
        <taxon>Rhizobium</taxon>
    </lineage>
</organism>